<keyword id="KW-0002">3D-structure</keyword>
<keyword id="KW-0025">Alternative splicing</keyword>
<keyword id="KW-1003">Cell membrane</keyword>
<keyword id="KW-0966">Cell projection</keyword>
<keyword id="KW-0868">Chloride</keyword>
<keyword id="KW-0869">Chloride channel</keyword>
<keyword id="KW-0963">Cytoplasm</keyword>
<keyword id="KW-0206">Cytoskeleton</keyword>
<keyword id="KW-0209">Deafness</keyword>
<keyword id="KW-0333">Golgi apparatus</keyword>
<keyword id="KW-1009">Hearing</keyword>
<keyword id="KW-0407">Ion channel</keyword>
<keyword id="KW-0406">Ion transport</keyword>
<keyword id="KW-0472">Membrane</keyword>
<keyword id="KW-0496">Mitochondrion</keyword>
<keyword id="KW-1010">Non-syndromic deafness</keyword>
<keyword id="KW-0560">Oxidoreductase</keyword>
<keyword id="KW-1267">Proteomics identification</keyword>
<keyword id="KW-1185">Reference proteome</keyword>
<keyword id="KW-0716">Sensory transduction</keyword>
<keyword id="KW-0812">Transmembrane</keyword>
<keyword id="KW-1133">Transmembrane helix</keyword>
<keyword id="KW-0813">Transport</keyword>
<keyword id="KW-0844">Vision</keyword>
<keyword id="KW-0851">Voltage-gated channel</keyword>
<gene>
    <name evidence="13 19" type="primary">CLIC5</name>
</gene>
<name>CLIC5_HUMAN</name>
<evidence type="ECO:0000250" key="1">
    <source>
        <dbReference type="UniProtKB" id="O00299"/>
    </source>
</evidence>
<evidence type="ECO:0000250" key="2">
    <source>
        <dbReference type="UniProtKB" id="Q8BXK9"/>
    </source>
</evidence>
<evidence type="ECO:0000250" key="3">
    <source>
        <dbReference type="UniProtKB" id="Q9EPT8"/>
    </source>
</evidence>
<evidence type="ECO:0000255" key="4"/>
<evidence type="ECO:0000255" key="5">
    <source>
        <dbReference type="PROSITE-ProRule" id="PRU00685"/>
    </source>
</evidence>
<evidence type="ECO:0000269" key="6">
    <source>
    </source>
</evidence>
<evidence type="ECO:0000269" key="7">
    <source>
    </source>
</evidence>
<evidence type="ECO:0000269" key="8">
    <source>
    </source>
</evidence>
<evidence type="ECO:0000269" key="9">
    <source>
    </source>
</evidence>
<evidence type="ECO:0000269" key="10">
    <source>
    </source>
</evidence>
<evidence type="ECO:0000269" key="11">
    <source>
    </source>
</evidence>
<evidence type="ECO:0000269" key="12">
    <source>
    </source>
</evidence>
<evidence type="ECO:0000303" key="13">
    <source>
    </source>
</evidence>
<evidence type="ECO:0000303" key="14">
    <source>
    </source>
</evidence>
<evidence type="ECO:0000303" key="15">
    <source>
    </source>
</evidence>
<evidence type="ECO:0000303" key="16">
    <source>
    </source>
</evidence>
<evidence type="ECO:0000305" key="17"/>
<evidence type="ECO:0000305" key="18">
    <source>
    </source>
</evidence>
<evidence type="ECO:0000312" key="19">
    <source>
        <dbReference type="HGNC" id="HGNC:13517"/>
    </source>
</evidence>
<evidence type="ECO:0007829" key="20">
    <source>
        <dbReference type="PDB" id="6Y2H"/>
    </source>
</evidence>
<proteinExistence type="evidence at protein level"/>
<accession>Q9NZA1</accession>
<accession>B3KUF1</accession>
<accession>Q5T4Z0</accession>
<accession>Q8NBY3</accession>
<accession>Q96JT5</accession>
<accession>Q9BWZ0</accession>
<dbReference type="EC" id="1.8.-.-" evidence="1"/>
<dbReference type="EMBL" id="AF216941">
    <property type="protein sequence ID" value="AAF66928.1"/>
    <property type="molecule type" value="mRNA"/>
</dbReference>
<dbReference type="EMBL" id="AY032602">
    <property type="protein sequence ID" value="AAK52083.1"/>
    <property type="molecule type" value="mRNA"/>
</dbReference>
<dbReference type="EMBL" id="AK075163">
    <property type="protein sequence ID" value="BAC11444.1"/>
    <property type="molecule type" value="mRNA"/>
</dbReference>
<dbReference type="EMBL" id="AK097048">
    <property type="protein sequence ID" value="BAG53413.1"/>
    <property type="molecule type" value="mRNA"/>
</dbReference>
<dbReference type="EMBL" id="AK075144">
    <property type="protein sequence ID" value="BAC11432.1"/>
    <property type="molecule type" value="mRNA"/>
</dbReference>
<dbReference type="EMBL" id="AL050336">
    <property type="status" value="NOT_ANNOTATED_CDS"/>
    <property type="molecule type" value="Genomic_DNA"/>
</dbReference>
<dbReference type="EMBL" id="AL357057">
    <property type="status" value="NOT_ANNOTATED_CDS"/>
    <property type="molecule type" value="Genomic_DNA"/>
</dbReference>
<dbReference type="EMBL" id="AL355522">
    <property type="status" value="NOT_ANNOTATED_CDS"/>
    <property type="molecule type" value="Genomic_DNA"/>
</dbReference>
<dbReference type="EMBL" id="AL591211">
    <property type="status" value="NOT_ANNOTATED_CDS"/>
    <property type="molecule type" value="Genomic_DNA"/>
</dbReference>
<dbReference type="EMBL" id="CH471081">
    <property type="protein sequence ID" value="EAX04286.1"/>
    <property type="molecule type" value="Genomic_DNA"/>
</dbReference>
<dbReference type="EMBL" id="CH471081">
    <property type="protein sequence ID" value="EAX04287.1"/>
    <property type="molecule type" value="Genomic_DNA"/>
</dbReference>
<dbReference type="EMBL" id="BC035968">
    <property type="protein sequence ID" value="AAH35968.1"/>
    <property type="molecule type" value="mRNA"/>
</dbReference>
<dbReference type="CCDS" id="CCDS47438.1">
    <molecule id="Q9NZA1-1"/>
</dbReference>
<dbReference type="CCDS" id="CCDS4914.1">
    <molecule id="Q9NZA1-2"/>
</dbReference>
<dbReference type="CCDS" id="CCDS59022.1">
    <molecule id="Q9NZA1-3"/>
</dbReference>
<dbReference type="RefSeq" id="NP_001107558.1">
    <molecule id="Q9NZA1-1"/>
    <property type="nucleotide sequence ID" value="NM_001114086.2"/>
</dbReference>
<dbReference type="RefSeq" id="NP_001242952.1">
    <molecule id="Q9NZA1-3"/>
    <property type="nucleotide sequence ID" value="NM_001256023.2"/>
</dbReference>
<dbReference type="RefSeq" id="NP_001357579.1">
    <molecule id="Q9NZA1-1"/>
    <property type="nucleotide sequence ID" value="NM_001370650.1"/>
</dbReference>
<dbReference type="RefSeq" id="NP_058625.2">
    <molecule id="Q9NZA1-2"/>
    <property type="nucleotide sequence ID" value="NM_016929.5"/>
</dbReference>
<dbReference type="RefSeq" id="XP_016866442.1">
    <property type="nucleotide sequence ID" value="XM_017010953.1"/>
</dbReference>
<dbReference type="PDB" id="6Y2H">
    <property type="method" value="X-ray"/>
    <property type="resolution" value="2.15 A"/>
    <property type="chains" value="A/B/C/D=175-410"/>
</dbReference>
<dbReference type="PDB" id="8Q4I">
    <property type="method" value="X-ray"/>
    <property type="resolution" value="2.10 A"/>
    <property type="chains" value="A/B=175-410"/>
</dbReference>
<dbReference type="PDB" id="8Q4J">
    <property type="method" value="X-ray"/>
    <property type="resolution" value="2.51 A"/>
    <property type="chains" value="A/B=175-410"/>
</dbReference>
<dbReference type="PDBsum" id="6Y2H"/>
<dbReference type="PDBsum" id="8Q4I"/>
<dbReference type="PDBsum" id="8Q4J"/>
<dbReference type="SMR" id="Q9NZA1"/>
<dbReference type="BioGRID" id="119781">
    <property type="interactions" value="18"/>
</dbReference>
<dbReference type="CORUM" id="Q9NZA1"/>
<dbReference type="FunCoup" id="Q9NZA1">
    <property type="interactions" value="246"/>
</dbReference>
<dbReference type="IntAct" id="Q9NZA1">
    <property type="interactions" value="17"/>
</dbReference>
<dbReference type="MINT" id="Q9NZA1"/>
<dbReference type="STRING" id="9606.ENSP00000185206"/>
<dbReference type="iPTMnet" id="Q9NZA1"/>
<dbReference type="PhosphoSitePlus" id="Q9NZA1"/>
<dbReference type="BioMuta" id="CLIC5"/>
<dbReference type="DMDM" id="215274174"/>
<dbReference type="OGP" id="Q9NZA1"/>
<dbReference type="jPOST" id="Q9NZA1"/>
<dbReference type="MassIVE" id="Q9NZA1"/>
<dbReference type="PaxDb" id="9606-ENSP00000185206"/>
<dbReference type="PeptideAtlas" id="Q9NZA1"/>
<dbReference type="ProteomicsDB" id="72834"/>
<dbReference type="ProteomicsDB" id="83343">
    <molecule id="Q9NZA1-1"/>
</dbReference>
<dbReference type="ProteomicsDB" id="83344">
    <molecule id="Q9NZA1-2"/>
</dbReference>
<dbReference type="Pumba" id="Q9NZA1"/>
<dbReference type="Antibodypedia" id="16850">
    <property type="antibodies" value="244 antibodies from 27 providers"/>
</dbReference>
<dbReference type="DNASU" id="53405"/>
<dbReference type="Ensembl" id="ENST00000185206.12">
    <molecule id="Q9NZA1-1"/>
    <property type="protein sequence ID" value="ENSP00000185206.6"/>
    <property type="gene ID" value="ENSG00000112782.19"/>
</dbReference>
<dbReference type="Ensembl" id="ENST00000339561.12">
    <molecule id="Q9NZA1-2"/>
    <property type="protein sequence ID" value="ENSP00000344165.6"/>
    <property type="gene ID" value="ENSG00000112782.19"/>
</dbReference>
<dbReference type="Ensembl" id="ENST00000544153.3">
    <molecule id="Q9NZA1-3"/>
    <property type="protein sequence ID" value="ENSP00000439195.1"/>
    <property type="gene ID" value="ENSG00000112782.19"/>
</dbReference>
<dbReference type="GeneID" id="53405"/>
<dbReference type="KEGG" id="hsa:53405"/>
<dbReference type="MANE-Select" id="ENST00000339561.12">
    <molecule id="Q9NZA1-2"/>
    <property type="protein sequence ID" value="ENSP00000344165.6"/>
    <property type="RefSeq nucleotide sequence ID" value="NM_016929.5"/>
    <property type="RefSeq protein sequence ID" value="NP_058625.2"/>
</dbReference>
<dbReference type="UCSC" id="uc003oxu.5">
    <molecule id="Q9NZA1-1"/>
    <property type="organism name" value="human"/>
</dbReference>
<dbReference type="AGR" id="HGNC:13517"/>
<dbReference type="CTD" id="53405"/>
<dbReference type="DisGeNET" id="53405"/>
<dbReference type="GeneCards" id="CLIC5"/>
<dbReference type="HGNC" id="HGNC:13517">
    <property type="gene designation" value="CLIC5"/>
</dbReference>
<dbReference type="HPA" id="ENSG00000112782">
    <property type="expression patterns" value="Tissue enhanced (heart muscle, skeletal muscle, tongue)"/>
</dbReference>
<dbReference type="MalaCards" id="CLIC5"/>
<dbReference type="MIM" id="607293">
    <property type="type" value="gene"/>
</dbReference>
<dbReference type="MIM" id="616042">
    <property type="type" value="phenotype"/>
</dbReference>
<dbReference type="neXtProt" id="NX_Q9NZA1"/>
<dbReference type="OpenTargets" id="ENSG00000112782"/>
<dbReference type="Orphanet" id="90636">
    <property type="disease" value="Rare autosomal recessive non-syndromic sensorineural deafness type DFNB"/>
</dbReference>
<dbReference type="PharmGKB" id="PA26592"/>
<dbReference type="VEuPathDB" id="HostDB:ENSG00000112782"/>
<dbReference type="eggNOG" id="KOG1422">
    <property type="taxonomic scope" value="Eukaryota"/>
</dbReference>
<dbReference type="GeneTree" id="ENSGT00940000156406"/>
<dbReference type="HOGENOM" id="CLU_048291_0_0_1"/>
<dbReference type="InParanoid" id="Q9NZA1"/>
<dbReference type="OMA" id="RCENSIE"/>
<dbReference type="OrthoDB" id="1935530at2759"/>
<dbReference type="PAN-GO" id="Q9NZA1">
    <property type="GO annotations" value="0 GO annotations based on evolutionary models"/>
</dbReference>
<dbReference type="PhylomeDB" id="Q9NZA1"/>
<dbReference type="TreeFam" id="TF315438"/>
<dbReference type="PathwayCommons" id="Q9NZA1"/>
<dbReference type="Reactome" id="R-HSA-9662360">
    <property type="pathway name" value="Sensory processing of sound by inner hair cells of the cochlea"/>
</dbReference>
<dbReference type="Reactome" id="R-HSA-9662361">
    <property type="pathway name" value="Sensory processing of sound by outer hair cells of the cochlea"/>
</dbReference>
<dbReference type="SignaLink" id="Q9NZA1"/>
<dbReference type="SIGNOR" id="Q9NZA1"/>
<dbReference type="BioGRID-ORCS" id="53405">
    <property type="hits" value="14 hits in 1146 CRISPR screens"/>
</dbReference>
<dbReference type="CD-CODE" id="91857CE7">
    <property type="entry name" value="Nucleolus"/>
</dbReference>
<dbReference type="ChiTaRS" id="CLIC5">
    <property type="organism name" value="human"/>
</dbReference>
<dbReference type="GeneWiki" id="CLIC5"/>
<dbReference type="GenomeRNAi" id="53405"/>
<dbReference type="Pharos" id="Q9NZA1">
    <property type="development level" value="Tbio"/>
</dbReference>
<dbReference type="PRO" id="PR:Q9NZA1"/>
<dbReference type="Proteomes" id="UP000005640">
    <property type="component" value="Chromosome 6"/>
</dbReference>
<dbReference type="RNAct" id="Q9NZA1">
    <property type="molecule type" value="protein"/>
</dbReference>
<dbReference type="Bgee" id="ENSG00000112782">
    <property type="expression patterns" value="Expressed in renal glomerulus and 194 other cell types or tissues"/>
</dbReference>
<dbReference type="ExpressionAtlas" id="Q9NZA1">
    <property type="expression patterns" value="baseline and differential"/>
</dbReference>
<dbReference type="GO" id="GO:0015629">
    <property type="term" value="C:actin cytoskeleton"/>
    <property type="evidence" value="ECO:0000314"/>
    <property type="project" value="UniProtKB"/>
</dbReference>
<dbReference type="GO" id="GO:0016324">
    <property type="term" value="C:apical plasma membrane"/>
    <property type="evidence" value="ECO:0007669"/>
    <property type="project" value="UniProtKB-SubCell"/>
</dbReference>
<dbReference type="GO" id="GO:0005938">
    <property type="term" value="C:cell cortex"/>
    <property type="evidence" value="ECO:0007669"/>
    <property type="project" value="UniProtKB-SubCell"/>
</dbReference>
<dbReference type="GO" id="GO:0005813">
    <property type="term" value="C:centrosome"/>
    <property type="evidence" value="ECO:0007669"/>
    <property type="project" value="UniProtKB-SubCell"/>
</dbReference>
<dbReference type="GO" id="GO:0034707">
    <property type="term" value="C:chloride channel complex"/>
    <property type="evidence" value="ECO:0007669"/>
    <property type="project" value="UniProtKB-KW"/>
</dbReference>
<dbReference type="GO" id="GO:0070062">
    <property type="term" value="C:extracellular exosome"/>
    <property type="evidence" value="ECO:0007005"/>
    <property type="project" value="UniProtKB"/>
</dbReference>
<dbReference type="GO" id="GO:0005794">
    <property type="term" value="C:Golgi apparatus"/>
    <property type="evidence" value="ECO:0000314"/>
    <property type="project" value="UniProtKB"/>
</dbReference>
<dbReference type="GO" id="GO:0005739">
    <property type="term" value="C:mitochondrion"/>
    <property type="evidence" value="ECO:0007669"/>
    <property type="project" value="UniProtKB-SubCell"/>
</dbReference>
<dbReference type="GO" id="GO:0032420">
    <property type="term" value="C:stereocilium"/>
    <property type="evidence" value="ECO:0007669"/>
    <property type="project" value="UniProtKB-SubCell"/>
</dbReference>
<dbReference type="GO" id="GO:0005254">
    <property type="term" value="F:chloride channel activity"/>
    <property type="evidence" value="ECO:0007669"/>
    <property type="project" value="UniProtKB-KW"/>
</dbReference>
<dbReference type="GO" id="GO:0016491">
    <property type="term" value="F:oxidoreductase activity"/>
    <property type="evidence" value="ECO:0007669"/>
    <property type="project" value="UniProtKB-KW"/>
</dbReference>
<dbReference type="GO" id="GO:0006821">
    <property type="term" value="P:chloride transport"/>
    <property type="evidence" value="ECO:0000314"/>
    <property type="project" value="UniProtKB"/>
</dbReference>
<dbReference type="GO" id="GO:0007565">
    <property type="term" value="P:female pregnancy"/>
    <property type="evidence" value="ECO:0000304"/>
    <property type="project" value="ProtInc"/>
</dbReference>
<dbReference type="GO" id="GO:0007605">
    <property type="term" value="P:sensory perception of sound"/>
    <property type="evidence" value="ECO:0000315"/>
    <property type="project" value="UniProtKB"/>
</dbReference>
<dbReference type="GO" id="GO:0007601">
    <property type="term" value="P:visual perception"/>
    <property type="evidence" value="ECO:0007669"/>
    <property type="project" value="UniProtKB-KW"/>
</dbReference>
<dbReference type="CDD" id="cd10297">
    <property type="entry name" value="GST_C_CLIC5"/>
    <property type="match status" value="1"/>
</dbReference>
<dbReference type="CDD" id="cd03061">
    <property type="entry name" value="GST_N_CLIC"/>
    <property type="match status" value="1"/>
</dbReference>
<dbReference type="FunFam" id="1.20.1050.10:FF:000001">
    <property type="entry name" value="Chloride intracellular channel 2"/>
    <property type="match status" value="1"/>
</dbReference>
<dbReference type="FunFam" id="3.40.30.10:FF:000021">
    <property type="entry name" value="Chloride intracellular channel 4"/>
    <property type="match status" value="1"/>
</dbReference>
<dbReference type="Gene3D" id="1.20.1050.10">
    <property type="match status" value="1"/>
</dbReference>
<dbReference type="Gene3D" id="3.40.30.10">
    <property type="entry name" value="Glutaredoxin"/>
    <property type="match status" value="1"/>
</dbReference>
<dbReference type="InterPro" id="IPR002946">
    <property type="entry name" value="CLIC"/>
</dbReference>
<dbReference type="InterPro" id="IPR042069">
    <property type="entry name" value="CLIC5_C_GST"/>
</dbReference>
<dbReference type="InterPro" id="IPR053823">
    <property type="entry name" value="CLIC_N"/>
</dbReference>
<dbReference type="InterPro" id="IPR010987">
    <property type="entry name" value="Glutathione-S-Trfase_C-like"/>
</dbReference>
<dbReference type="InterPro" id="IPR036282">
    <property type="entry name" value="Glutathione-S-Trfase_C_sf"/>
</dbReference>
<dbReference type="InterPro" id="IPR040079">
    <property type="entry name" value="Glutathione_S-Trfase"/>
</dbReference>
<dbReference type="InterPro" id="IPR036249">
    <property type="entry name" value="Thioredoxin-like_sf"/>
</dbReference>
<dbReference type="NCBIfam" id="TIGR00862">
    <property type="entry name" value="O-ClC"/>
    <property type="match status" value="1"/>
</dbReference>
<dbReference type="PANTHER" id="PTHR45476:SF4">
    <property type="entry name" value="CHLORIDE INTRACELLULAR CHANNEL PROTEIN 5"/>
    <property type="match status" value="1"/>
</dbReference>
<dbReference type="PANTHER" id="PTHR45476">
    <property type="entry name" value="CHLORIDE INTRACELLULAR CHANNEL PROTEIN 6-RELATED"/>
    <property type="match status" value="1"/>
</dbReference>
<dbReference type="Pfam" id="PF22441">
    <property type="entry name" value="CLIC-like_N"/>
    <property type="match status" value="1"/>
</dbReference>
<dbReference type="Pfam" id="PF13410">
    <property type="entry name" value="GST_C_2"/>
    <property type="match status" value="1"/>
</dbReference>
<dbReference type="PRINTS" id="PR01263">
    <property type="entry name" value="INTCLCHANNEL"/>
</dbReference>
<dbReference type="SFLD" id="SFLDS00019">
    <property type="entry name" value="Glutathione_Transferase_(cytos"/>
    <property type="match status" value="1"/>
</dbReference>
<dbReference type="SFLD" id="SFLDG00358">
    <property type="entry name" value="Main_(cytGST)"/>
    <property type="match status" value="1"/>
</dbReference>
<dbReference type="SUPFAM" id="SSF47616">
    <property type="entry name" value="GST C-terminal domain-like"/>
    <property type="match status" value="1"/>
</dbReference>
<dbReference type="SUPFAM" id="SSF52833">
    <property type="entry name" value="Thioredoxin-like"/>
    <property type="match status" value="1"/>
</dbReference>
<dbReference type="PROSITE" id="PS50405">
    <property type="entry name" value="GST_CTER"/>
    <property type="match status" value="1"/>
</dbReference>
<protein>
    <recommendedName>
        <fullName>Chloride intracellular channel protein 5</fullName>
    </recommendedName>
    <alternativeName>
        <fullName evidence="1">Glutaredoxin-like oxidoreductase CLIC5</fullName>
        <ecNumber evidence="1">1.8.-.-</ecNumber>
    </alternativeName>
</protein>
<reference key="1">
    <citation type="journal article" date="2000" name="Mol. Biol. Cell">
        <title>Identification of a novel member of the chloride intracellular channel gene family (CLIC5) that associates with the actin cytoskeleton of placental microvilli.</title>
        <authorList>
            <person name="Berryman M."/>
            <person name="Bretscher A."/>
        </authorList>
    </citation>
    <scope>NUCLEOTIDE SEQUENCE [MRNA] (ISOFORM 1)</scope>
    <scope>SUBCELLULAR LOCATION (ISOFORM 1)</scope>
</reference>
<reference key="2">
    <citation type="journal article" date="2002" name="J. Biol. Chem.">
        <title>AKAP350 at the Golgi apparatus. II. Association of AKAP350 with a novel chloride intracellular channel (CLIC) family member.</title>
        <authorList>
            <person name="Shanks R.A."/>
            <person name="Larocca M.C."/>
            <person name="Berryman M."/>
            <person name="Edwards J.C."/>
            <person name="Urushidani T."/>
            <person name="Navarre J."/>
            <person name="Goldenring J.R."/>
        </authorList>
    </citation>
    <scope>NUCLEOTIDE SEQUENCE [MRNA] (ISOFORM 2)</scope>
    <scope>INTERACTION WITH AKAP9</scope>
    <scope>SUBCELLULAR LOCATION (ISOFORM 2)</scope>
    <source>
        <tissue>Colon adenocarcinoma</tissue>
    </source>
</reference>
<reference key="3">
    <citation type="journal article" date="2004" name="Nat. Genet.">
        <title>Complete sequencing and characterization of 21,243 full-length human cDNAs.</title>
        <authorList>
            <person name="Ota T."/>
            <person name="Suzuki Y."/>
            <person name="Nishikawa T."/>
            <person name="Otsuki T."/>
            <person name="Sugiyama T."/>
            <person name="Irie R."/>
            <person name="Wakamatsu A."/>
            <person name="Hayashi K."/>
            <person name="Sato H."/>
            <person name="Nagai K."/>
            <person name="Kimura K."/>
            <person name="Makita H."/>
            <person name="Sekine M."/>
            <person name="Obayashi M."/>
            <person name="Nishi T."/>
            <person name="Shibahara T."/>
            <person name="Tanaka T."/>
            <person name="Ishii S."/>
            <person name="Yamamoto J."/>
            <person name="Saito K."/>
            <person name="Kawai Y."/>
            <person name="Isono Y."/>
            <person name="Nakamura Y."/>
            <person name="Nagahari K."/>
            <person name="Murakami K."/>
            <person name="Yasuda T."/>
            <person name="Iwayanagi T."/>
            <person name="Wagatsuma M."/>
            <person name="Shiratori A."/>
            <person name="Sudo H."/>
            <person name="Hosoiri T."/>
            <person name="Kaku Y."/>
            <person name="Kodaira H."/>
            <person name="Kondo H."/>
            <person name="Sugawara M."/>
            <person name="Takahashi M."/>
            <person name="Kanda K."/>
            <person name="Yokoi T."/>
            <person name="Furuya T."/>
            <person name="Kikkawa E."/>
            <person name="Omura Y."/>
            <person name="Abe K."/>
            <person name="Kamihara K."/>
            <person name="Katsuta N."/>
            <person name="Sato K."/>
            <person name="Tanikawa M."/>
            <person name="Yamazaki M."/>
            <person name="Ninomiya K."/>
            <person name="Ishibashi T."/>
            <person name="Yamashita H."/>
            <person name="Murakawa K."/>
            <person name="Fujimori K."/>
            <person name="Tanai H."/>
            <person name="Kimata M."/>
            <person name="Watanabe M."/>
            <person name="Hiraoka S."/>
            <person name="Chiba Y."/>
            <person name="Ishida S."/>
            <person name="Ono Y."/>
            <person name="Takiguchi S."/>
            <person name="Watanabe S."/>
            <person name="Yosida M."/>
            <person name="Hotuta T."/>
            <person name="Kusano J."/>
            <person name="Kanehori K."/>
            <person name="Takahashi-Fujii A."/>
            <person name="Hara H."/>
            <person name="Tanase T.-O."/>
            <person name="Nomura Y."/>
            <person name="Togiya S."/>
            <person name="Komai F."/>
            <person name="Hara R."/>
            <person name="Takeuchi K."/>
            <person name="Arita M."/>
            <person name="Imose N."/>
            <person name="Musashino K."/>
            <person name="Yuuki H."/>
            <person name="Oshima A."/>
            <person name="Sasaki N."/>
            <person name="Aotsuka S."/>
            <person name="Yoshikawa Y."/>
            <person name="Matsunawa H."/>
            <person name="Ichihara T."/>
            <person name="Shiohata N."/>
            <person name="Sano S."/>
            <person name="Moriya S."/>
            <person name="Momiyama H."/>
            <person name="Satoh N."/>
            <person name="Takami S."/>
            <person name="Terashima Y."/>
            <person name="Suzuki O."/>
            <person name="Nakagawa S."/>
            <person name="Senoh A."/>
            <person name="Mizoguchi H."/>
            <person name="Goto Y."/>
            <person name="Shimizu F."/>
            <person name="Wakebe H."/>
            <person name="Hishigaki H."/>
            <person name="Watanabe T."/>
            <person name="Sugiyama A."/>
            <person name="Takemoto M."/>
            <person name="Kawakami B."/>
            <person name="Yamazaki M."/>
            <person name="Watanabe K."/>
            <person name="Kumagai A."/>
            <person name="Itakura S."/>
            <person name="Fukuzumi Y."/>
            <person name="Fujimori Y."/>
            <person name="Komiyama M."/>
            <person name="Tashiro H."/>
            <person name="Tanigami A."/>
            <person name="Fujiwara T."/>
            <person name="Ono T."/>
            <person name="Yamada K."/>
            <person name="Fujii Y."/>
            <person name="Ozaki K."/>
            <person name="Hirao M."/>
            <person name="Ohmori Y."/>
            <person name="Kawabata A."/>
            <person name="Hikiji T."/>
            <person name="Kobatake N."/>
            <person name="Inagaki H."/>
            <person name="Ikema Y."/>
            <person name="Okamoto S."/>
            <person name="Okitani R."/>
            <person name="Kawakami T."/>
            <person name="Noguchi S."/>
            <person name="Itoh T."/>
            <person name="Shigeta K."/>
            <person name="Senba T."/>
            <person name="Matsumura K."/>
            <person name="Nakajima Y."/>
            <person name="Mizuno T."/>
            <person name="Morinaga M."/>
            <person name="Sasaki M."/>
            <person name="Togashi T."/>
            <person name="Oyama M."/>
            <person name="Hata H."/>
            <person name="Watanabe M."/>
            <person name="Komatsu T."/>
            <person name="Mizushima-Sugano J."/>
            <person name="Satoh T."/>
            <person name="Shirai Y."/>
            <person name="Takahashi Y."/>
            <person name="Nakagawa K."/>
            <person name="Okumura K."/>
            <person name="Nagase T."/>
            <person name="Nomura N."/>
            <person name="Kikuchi H."/>
            <person name="Masuho Y."/>
            <person name="Yamashita R."/>
            <person name="Nakai K."/>
            <person name="Yada T."/>
            <person name="Nakamura Y."/>
            <person name="Ohara O."/>
            <person name="Isogai T."/>
            <person name="Sugano S."/>
        </authorList>
    </citation>
    <scope>NUCLEOTIDE SEQUENCE [LARGE SCALE MRNA] (ISOFORMS 1 AND 2)</scope>
    <source>
        <tissue>Placenta</tissue>
        <tissue>Small intestine</tissue>
    </source>
</reference>
<reference key="4">
    <citation type="journal article" date="2005" name="DNA Res.">
        <title>Signal sequence and keyword trap in silico for selection of full-length human cDNAs encoding secretion or membrane proteins from oligo-capped cDNA libraries.</title>
        <authorList>
            <person name="Otsuki T."/>
            <person name="Ota T."/>
            <person name="Nishikawa T."/>
            <person name="Hayashi K."/>
            <person name="Suzuki Y."/>
            <person name="Yamamoto J."/>
            <person name="Wakamatsu A."/>
            <person name="Kimura K."/>
            <person name="Sakamoto K."/>
            <person name="Hatano N."/>
            <person name="Kawai Y."/>
            <person name="Ishii S."/>
            <person name="Saito K."/>
            <person name="Kojima S."/>
            <person name="Sugiyama T."/>
            <person name="Ono T."/>
            <person name="Okano K."/>
            <person name="Yoshikawa Y."/>
            <person name="Aotsuka S."/>
            <person name="Sasaki N."/>
            <person name="Hattori A."/>
            <person name="Okumura K."/>
            <person name="Nagai K."/>
            <person name="Sugano S."/>
            <person name="Isogai T."/>
        </authorList>
    </citation>
    <scope>NUCLEOTIDE SEQUENCE [LARGE SCALE MRNA] (ISOFORM 3)</scope>
    <source>
        <tissue>Placenta</tissue>
    </source>
</reference>
<reference key="5">
    <citation type="journal article" date="2003" name="Nature">
        <title>The DNA sequence and analysis of human chromosome 6.</title>
        <authorList>
            <person name="Mungall A.J."/>
            <person name="Palmer S.A."/>
            <person name="Sims S.K."/>
            <person name="Edwards C.A."/>
            <person name="Ashurst J.L."/>
            <person name="Wilming L."/>
            <person name="Jones M.C."/>
            <person name="Horton R."/>
            <person name="Hunt S.E."/>
            <person name="Scott C.E."/>
            <person name="Gilbert J.G.R."/>
            <person name="Clamp M.E."/>
            <person name="Bethel G."/>
            <person name="Milne S."/>
            <person name="Ainscough R."/>
            <person name="Almeida J.P."/>
            <person name="Ambrose K.D."/>
            <person name="Andrews T.D."/>
            <person name="Ashwell R.I.S."/>
            <person name="Babbage A.K."/>
            <person name="Bagguley C.L."/>
            <person name="Bailey J."/>
            <person name="Banerjee R."/>
            <person name="Barker D.J."/>
            <person name="Barlow K.F."/>
            <person name="Bates K."/>
            <person name="Beare D.M."/>
            <person name="Beasley H."/>
            <person name="Beasley O."/>
            <person name="Bird C.P."/>
            <person name="Blakey S.E."/>
            <person name="Bray-Allen S."/>
            <person name="Brook J."/>
            <person name="Brown A.J."/>
            <person name="Brown J.Y."/>
            <person name="Burford D.C."/>
            <person name="Burrill W."/>
            <person name="Burton J."/>
            <person name="Carder C."/>
            <person name="Carter N.P."/>
            <person name="Chapman J.C."/>
            <person name="Clark S.Y."/>
            <person name="Clark G."/>
            <person name="Clee C.M."/>
            <person name="Clegg S."/>
            <person name="Cobley V."/>
            <person name="Collier R.E."/>
            <person name="Collins J.E."/>
            <person name="Colman L.K."/>
            <person name="Corby N.R."/>
            <person name="Coville G.J."/>
            <person name="Culley K.M."/>
            <person name="Dhami P."/>
            <person name="Davies J."/>
            <person name="Dunn M."/>
            <person name="Earthrowl M.E."/>
            <person name="Ellington A.E."/>
            <person name="Evans K.A."/>
            <person name="Faulkner L."/>
            <person name="Francis M.D."/>
            <person name="Frankish A."/>
            <person name="Frankland J."/>
            <person name="French L."/>
            <person name="Garner P."/>
            <person name="Garnett J."/>
            <person name="Ghori M.J."/>
            <person name="Gilby L.M."/>
            <person name="Gillson C.J."/>
            <person name="Glithero R.J."/>
            <person name="Grafham D.V."/>
            <person name="Grant M."/>
            <person name="Gribble S."/>
            <person name="Griffiths C."/>
            <person name="Griffiths M.N.D."/>
            <person name="Hall R."/>
            <person name="Halls K.S."/>
            <person name="Hammond S."/>
            <person name="Harley J.L."/>
            <person name="Hart E.A."/>
            <person name="Heath P.D."/>
            <person name="Heathcott R."/>
            <person name="Holmes S.J."/>
            <person name="Howden P.J."/>
            <person name="Howe K.L."/>
            <person name="Howell G.R."/>
            <person name="Huckle E."/>
            <person name="Humphray S.J."/>
            <person name="Humphries M.D."/>
            <person name="Hunt A.R."/>
            <person name="Johnson C.M."/>
            <person name="Joy A.A."/>
            <person name="Kay M."/>
            <person name="Keenan S.J."/>
            <person name="Kimberley A.M."/>
            <person name="King A."/>
            <person name="Laird G.K."/>
            <person name="Langford C."/>
            <person name="Lawlor S."/>
            <person name="Leongamornlert D.A."/>
            <person name="Leversha M."/>
            <person name="Lloyd C.R."/>
            <person name="Lloyd D.M."/>
            <person name="Loveland J.E."/>
            <person name="Lovell J."/>
            <person name="Martin S."/>
            <person name="Mashreghi-Mohammadi M."/>
            <person name="Maslen G.L."/>
            <person name="Matthews L."/>
            <person name="McCann O.T."/>
            <person name="McLaren S.J."/>
            <person name="McLay K."/>
            <person name="McMurray A."/>
            <person name="Moore M.J.F."/>
            <person name="Mullikin J.C."/>
            <person name="Niblett D."/>
            <person name="Nickerson T."/>
            <person name="Novik K.L."/>
            <person name="Oliver K."/>
            <person name="Overton-Larty E.K."/>
            <person name="Parker A."/>
            <person name="Patel R."/>
            <person name="Pearce A.V."/>
            <person name="Peck A.I."/>
            <person name="Phillimore B.J.C.T."/>
            <person name="Phillips S."/>
            <person name="Plumb R.W."/>
            <person name="Porter K.M."/>
            <person name="Ramsey Y."/>
            <person name="Ranby S.A."/>
            <person name="Rice C.M."/>
            <person name="Ross M.T."/>
            <person name="Searle S.M."/>
            <person name="Sehra H.K."/>
            <person name="Sheridan E."/>
            <person name="Skuce C.D."/>
            <person name="Smith S."/>
            <person name="Smith M."/>
            <person name="Spraggon L."/>
            <person name="Squares S.L."/>
            <person name="Steward C.A."/>
            <person name="Sycamore N."/>
            <person name="Tamlyn-Hall G."/>
            <person name="Tester J."/>
            <person name="Theaker A.J."/>
            <person name="Thomas D.W."/>
            <person name="Thorpe A."/>
            <person name="Tracey A."/>
            <person name="Tromans A."/>
            <person name="Tubby B."/>
            <person name="Wall M."/>
            <person name="Wallis J.M."/>
            <person name="West A.P."/>
            <person name="White S.S."/>
            <person name="Whitehead S.L."/>
            <person name="Whittaker H."/>
            <person name="Wild A."/>
            <person name="Willey D.J."/>
            <person name="Wilmer T.E."/>
            <person name="Wood J.M."/>
            <person name="Wray P.W."/>
            <person name="Wyatt J.C."/>
            <person name="Young L."/>
            <person name="Younger R.M."/>
            <person name="Bentley D.R."/>
            <person name="Coulson A."/>
            <person name="Durbin R.M."/>
            <person name="Hubbard T."/>
            <person name="Sulston J.E."/>
            <person name="Dunham I."/>
            <person name="Rogers J."/>
            <person name="Beck S."/>
        </authorList>
    </citation>
    <scope>NUCLEOTIDE SEQUENCE [LARGE SCALE GENOMIC DNA]</scope>
</reference>
<reference key="6">
    <citation type="submission" date="2005-07" db="EMBL/GenBank/DDBJ databases">
        <authorList>
            <person name="Mural R.J."/>
            <person name="Istrail S."/>
            <person name="Sutton G.G."/>
            <person name="Florea L."/>
            <person name="Halpern A.L."/>
            <person name="Mobarry C.M."/>
            <person name="Lippert R."/>
            <person name="Walenz B."/>
            <person name="Shatkay H."/>
            <person name="Dew I."/>
            <person name="Miller J.R."/>
            <person name="Flanigan M.J."/>
            <person name="Edwards N.J."/>
            <person name="Bolanos R."/>
            <person name="Fasulo D."/>
            <person name="Halldorsson B.V."/>
            <person name="Hannenhalli S."/>
            <person name="Turner R."/>
            <person name="Yooseph S."/>
            <person name="Lu F."/>
            <person name="Nusskern D.R."/>
            <person name="Shue B.C."/>
            <person name="Zheng X.H."/>
            <person name="Zhong F."/>
            <person name="Delcher A.L."/>
            <person name="Huson D.H."/>
            <person name="Kravitz S.A."/>
            <person name="Mouchard L."/>
            <person name="Reinert K."/>
            <person name="Remington K.A."/>
            <person name="Clark A.G."/>
            <person name="Waterman M.S."/>
            <person name="Eichler E.E."/>
            <person name="Adams M.D."/>
            <person name="Hunkapiller M.W."/>
            <person name="Myers E.W."/>
            <person name="Venter J.C."/>
        </authorList>
    </citation>
    <scope>NUCLEOTIDE SEQUENCE [LARGE SCALE GENOMIC DNA]</scope>
</reference>
<reference key="7">
    <citation type="journal article" date="2004" name="Genome Res.">
        <title>The status, quality, and expansion of the NIH full-length cDNA project: the Mammalian Gene Collection (MGC).</title>
        <authorList>
            <consortium name="The MGC Project Team"/>
        </authorList>
    </citation>
    <scope>NUCLEOTIDE SEQUENCE [LARGE SCALE MRNA] (ISOFORM 1)</scope>
    <source>
        <tissue>Kidney</tissue>
    </source>
</reference>
<reference key="8">
    <citation type="journal article" date="2004" name="J. Biol. Chem.">
        <title>CLIC-5A functions as a chloride channel in vitro and associates with the cortical actin cytoskeleton in vitro and in vivo.</title>
        <authorList>
            <person name="Berryman M."/>
            <person name="Bruno J."/>
            <person name="Price J."/>
            <person name="Edwards J.C."/>
        </authorList>
    </citation>
    <scope>FUNCTION</scope>
    <scope>TRANSPORTER ACTIVITY (ISOFORM 1)</scope>
    <scope>SUBCELLULAR LOCATION (ISOFORM 1)</scope>
</reference>
<reference key="9">
    <citation type="journal article" date="2007" name="FEBS J.">
        <title>Functional reconstitution of mammalian 'chloride intracellular channels' CLIC1, CLIC4 and CLIC5 reveals differential regulation by cytoskeletal actin.</title>
        <authorList>
            <person name="Singh H."/>
            <person name="Cousin M.A."/>
            <person name="Ashley R.H."/>
        </authorList>
    </citation>
    <scope>FUNCTION</scope>
    <scope>TRANSPORTER ACTIVITY (ISOFORM 1)</scope>
    <scope>ACTIVITY REGULATION</scope>
    <scope>SUBCELLULAR LOCATION (ISOFORM 1)</scope>
    <scope>INTERACTION WITH F-ACTIN</scope>
</reference>
<reference key="10">
    <citation type="journal article" date="2010" name="Am. J. Physiol.">
        <title>CLIC5A, a component of the ezrin-podocalyxin complex in glomeruli, is a determinant of podocyte integrity.</title>
        <authorList>
            <person name="Wegner B."/>
            <person name="Al-Momany A."/>
            <person name="Kulak S.C."/>
            <person name="Kozlowski K."/>
            <person name="Obeidat M."/>
            <person name="Jahroudi N."/>
            <person name="Paes J."/>
            <person name="Berryman M."/>
            <person name="Ballermann B.J."/>
        </authorList>
    </citation>
    <scope>FUNCTION</scope>
    <scope>SUBCELLULAR LOCATION (ISOFORM 1)</scope>
    <scope>TISSUE SPECIFICITY (ISOFORM 1)</scope>
</reference>
<reference key="11">
    <citation type="journal article" date="2014" name="Cytoskeleton">
        <title>CLIC5 stabilizes membrane-actin filament linkages at the base of hair cell stereocilia in a molecular complex with radixin, taperin, and myosin VI.</title>
        <authorList>
            <person name="Salles F.T."/>
            <person name="Andrade L.R."/>
            <person name="Tanda S."/>
            <person name="Grati M."/>
            <person name="Plona K.L."/>
            <person name="Gagnon L.H."/>
            <person name="Johnson K.R."/>
            <person name="Kachar B."/>
            <person name="Berryman M.A."/>
        </authorList>
    </citation>
    <scope>INTERACTION WITH TPRN</scope>
    <scope>SUBCELLULAR LOCATION</scope>
</reference>
<reference key="12">
    <citation type="journal article" date="2015" name="Eur. J. Hum. Genet.">
        <title>Progressive hearing loss and vestibular dysfunction caused by a homozygous nonsense mutation in CLIC5.</title>
        <authorList>
            <person name="Seco C.Z."/>
            <person name="Oonk A.M."/>
            <person name="Dominguez-Ruiz M."/>
            <person name="Draaisma J.M."/>
            <person name="Gandia M."/>
            <person name="Oostrik J."/>
            <person name="Neveling K."/>
            <person name="Kunst H.P."/>
            <person name="Hoefsloot L.H."/>
            <person name="Del Castillo I."/>
            <person name="Pennings R.J."/>
            <person name="Kremer H."/>
            <person name="Admiraal R.J."/>
            <person name="Schraders M."/>
        </authorList>
    </citation>
    <scope>FUNCTION</scope>
    <scope>TISSUE SPECIFICITY</scope>
    <scope>INVOLVEMENT IN DFNB103</scope>
</reference>
<comment type="function">
    <text evidence="1 2 8 9 10 12">In the soluble state, catalyzes glutaredoxin-like thiol disulfide exchange reactions with reduced glutathione as electron donor (By similarity). Can insert into membranes and form non-selective ion channels almost equally permeable to Na(+), K(+) and Cl(-) (PubMed:15184393, PubMed:18028448). Required for normal hearing (PubMed:24781754). It is necessary for the formation of stereocilia in the inner ear and normal development of the organ of Corti (By similarity). May play a role in the regulation of transepithelial ion absorption and secretion. Is required for the development and/or maintenance of the proper glomerular endothelial cell and podocyte architecture (PubMed:15184393, PubMed:18028448, PubMed:20335315). Plays a role in formation of the lens suture in the eye, which is important for normal optical properties of the lens (By similarity).</text>
</comment>
<comment type="catalytic activity">
    <molecule>Isoform 1</molecule>
    <reaction evidence="8 9">
        <text>chloride(in) = chloride(out)</text>
        <dbReference type="Rhea" id="RHEA:29823"/>
        <dbReference type="ChEBI" id="CHEBI:17996"/>
    </reaction>
</comment>
<comment type="catalytic activity">
    <molecule>Isoform 1</molecule>
    <reaction evidence="9">
        <text>Na(+)(in) = Na(+)(out)</text>
        <dbReference type="Rhea" id="RHEA:34963"/>
        <dbReference type="ChEBI" id="CHEBI:29101"/>
    </reaction>
</comment>
<comment type="catalytic activity">
    <molecule>Isoform 1</molecule>
    <reaction evidence="9">
        <text>K(+)(in) = K(+)(out)</text>
        <dbReference type="Rhea" id="RHEA:29463"/>
        <dbReference type="ChEBI" id="CHEBI:29103"/>
    </reaction>
</comment>
<comment type="activity regulation">
    <text evidence="9">Inhibited by F-actin.</text>
</comment>
<comment type="subunit">
    <text evidence="2 7 9 11">Component of a multimeric complex consisting of several cytoskeletal proteins, including actin, ezrin, alpha-actinin, gelsolin, and IQGAP1. Interacts with AKAP9 (PubMed:12163479). Interacts with TPRN (PubMed:24285636). TPRN, CLIC5 and PTPQR form concentric rings at the base of stereocilia and may form a complex (By similarity). Interacts with EZR, MYO6 and RDX; the proteins may work together as a complex to stabilize linkages between the plasma membrane and subjacent actin cytoskeleton at the stereocilium base (By similarity).</text>
</comment>
<comment type="interaction">
    <interactant intactId="EBI-5658997">
        <id>Q9NZA1</id>
    </interactant>
    <interactant intactId="EBI-848039">
        <id>P00523</id>
        <label>SRC</label>
    </interactant>
    <organismsDiffer>true</organismsDiffer>
    <experiments>2</experiments>
</comment>
<comment type="interaction">
    <interactant intactId="EBI-13076412">
        <id>Q9NZA1-2</id>
    </interactant>
    <interactant intactId="EBI-11978969">
        <id>Q4KMQ1-2</id>
        <label>TPRN</label>
    </interactant>
    <organismsDiffer>false</organismsDiffer>
    <experiments>6</experiments>
</comment>
<comment type="subcellular location">
    <molecule>Isoform 1</molecule>
    <subcellularLocation>
        <location evidence="6 8">Cytoplasm</location>
        <location evidence="6 8">Cytoskeleton</location>
    </subcellularLocation>
    <subcellularLocation>
        <location evidence="8">Cytoplasm</location>
        <location evidence="8">Cell cortex</location>
    </subcellularLocation>
    <subcellularLocation>
        <location evidence="8 18">Membrane</location>
        <topology evidence="17">Single-pass membrane protein</topology>
    </subcellularLocation>
    <subcellularLocation>
        <location evidence="10">Apical cell membrane</location>
        <topology evidence="17">Single-pass membrane protein</topology>
    </subcellularLocation>
    <subcellularLocation>
        <location evidence="1">Cytoplasm</location>
    </subcellularLocation>
    <subcellularLocation>
        <location evidence="3">Mitochondrion</location>
    </subcellularLocation>
    <subcellularLocation>
        <location evidence="11">Cell projection</location>
        <location evidence="11">Stereocilium</location>
    </subcellularLocation>
    <text evidence="1 2 3 6 8 10">Associates with the cortical actin cytoskeleton (PubMed:10793131, PubMed:15184393). Localizes to the apical region of cochlear hair cells, at the base of the actin-rich hair bundle (By similarity). Colocalizes with podocalyxin at the apical cell membrane in renal glomeruli (PubMed:20335315). May localize to the centrosome in lens epithelial cells (By similarity). Exists both as soluble cytoplasmic protein and as membrane protein with probably a single transmembrane domain (By similarity).</text>
</comment>
<comment type="subcellular location">
    <molecule>Isoform 2</molecule>
    <subcellularLocation>
        <location evidence="7">Golgi apparatus</location>
    </subcellularLocation>
    <subcellularLocation>
        <location evidence="7">Cytoplasm</location>
        <location evidence="7">Cytoskeleton</location>
        <location evidence="7">Microtubule organizing center</location>
        <location evidence="7">Centrosome</location>
    </subcellularLocation>
    <text evidence="7">Colocalizes with AKAP9 at the Golgi apparatus as well as, to a lesser extent, the centrosome.</text>
</comment>
<comment type="alternative products">
    <event type="alternative splicing"/>
    <isoform>
        <id>Q9NZA1-1</id>
        <name>2</name>
        <name>CLIC5B</name>
        <sequence type="displayed"/>
    </isoform>
    <isoform>
        <id>Q9NZA1-2</id>
        <name>1</name>
        <name>CLIC5A</name>
        <sequence type="described" ref="VSP_000869 VSP_000870"/>
    </isoform>
    <isoform>
        <id>Q9NZA1-3</id>
        <name>3</name>
        <sequence type="described" ref="VSP_044889 VSP_044890 VSP_044891"/>
    </isoform>
</comment>
<comment type="tissue specificity">
    <text evidence="10 12">Widely expressed in both fetal and adult human tissues (PubMed:24781754). Isoform 1 is expressed in renal glomeruli endothelial cells and podocytes (at protein level).</text>
</comment>
<comment type="domain">
    <text evidence="1">The active G-site contains a monothiol Cys-X-X-Ser motif which mediates glutathione-dependent redox catalysis.</text>
</comment>
<comment type="domain">
    <text evidence="1">Members of this family may change from a globular, soluble state to a state where the N-terminal domain is inserted into the membrane and functions as a chloride channel. The redox status of the active cysteine in Cys-X-X-Cys/Ser motif likely determines the capacity to adopt a soluble or membrane-inserted state. A conformation change of the N-terminal domain is thought to expose hydrophobic surfaces that trigger membrane insertion (By similarity).</text>
</comment>
<comment type="disease" evidence="12">
    <disease id="DI-04268">
        <name>Deafness, autosomal recessive, 103</name>
        <acronym>DFNB103</acronym>
        <description>A form of sensorineural deafness with onset in early childhood. Hearing impairment progresses from mild to severe or even profound before the second decade, and is accompanied by vestibular areflexia.</description>
        <dbReference type="MIM" id="616042"/>
    </disease>
    <text>The disease is caused by variants affecting the gene represented in this entry.</text>
</comment>
<comment type="similarity">
    <text evidence="17">Belongs to the chloride channel CLIC family.</text>
</comment>
<sequence>MNDEDYSTIYDTIQNERTYEVPDQPEENESPHYDDVHEYLRPENDLYATQLNTHEYDFVSVYTIKGEETSLASVQSEDRGYLLPDEIYSELQEAHPGEPQEDRGISMEGLYSSTQDQQLCAAELQENGSVMKEDLPSPSSFTIQHSKAFSTTKYSCYSDAEGLEEKEGAHMNPEIYLFVKAGIDGESIGNCPFSQRLFMILWLKGVVFNVTTVDLKRKPADLHNLAPGTHPPFLTFNGDVKTDVNKIEEFLEETLTPEKYPKLAAKHRESNTAGIDIFSKFSAYIKNTKQQNNAALERGLTKALKKLDDYLNTPLPEEIDANTCGEDKGSRRKFLDGDELTLADCNLLPKLHVVKIVAKKYRNYDIPAEMTGLWRYLKNAYARDEFTNTCAADSEIELAYADVAKRLSRS</sequence>
<organism>
    <name type="scientific">Homo sapiens</name>
    <name type="common">Human</name>
    <dbReference type="NCBI Taxonomy" id="9606"/>
    <lineage>
        <taxon>Eukaryota</taxon>
        <taxon>Metazoa</taxon>
        <taxon>Chordata</taxon>
        <taxon>Craniata</taxon>
        <taxon>Vertebrata</taxon>
        <taxon>Euteleostomi</taxon>
        <taxon>Mammalia</taxon>
        <taxon>Eutheria</taxon>
        <taxon>Euarchontoglires</taxon>
        <taxon>Primates</taxon>
        <taxon>Haplorrhini</taxon>
        <taxon>Catarrhini</taxon>
        <taxon>Hominidae</taxon>
        <taxon>Homo</taxon>
    </lineage>
</organism>
<feature type="chain" id="PRO_0000144214" description="Chloride intracellular channel protein 5">
    <location>
        <begin position="1"/>
        <end position="410"/>
    </location>
</feature>
<feature type="transmembrane region" description="Helical; Note=After insertion into the membrane" evidence="4">
    <location>
        <begin position="193"/>
        <end position="213"/>
    </location>
</feature>
<feature type="domain" description="GST C-terminal" evidence="5">
    <location>
        <begin position="260"/>
        <end position="400"/>
    </location>
</feature>
<feature type="short sequence motif" description="G-site" evidence="1">
    <location>
        <begin position="191"/>
        <end position="194"/>
    </location>
</feature>
<feature type="splice variant" id="VSP_000869" description="In isoform 1." evidence="13 14 15">
    <location>
        <begin position="1"/>
        <end position="159"/>
    </location>
</feature>
<feature type="splice variant" id="VSP_044889" description="In isoform 3." evidence="16">
    <original>MNDEDYSTIYDTIQNER</original>
    <variation>MTDSATANGDDRDPEIE</variation>
    <location>
        <begin position="1"/>
        <end position="17"/>
    </location>
</feature>
<feature type="splice variant" id="VSP_044890" description="In isoform 3." evidence="16">
    <location>
        <begin position="18"/>
        <end position="176"/>
    </location>
</feature>
<feature type="splice variant" id="VSP_000870" description="In isoform 1." evidence="13 14 15">
    <original>AEGLEEKEGAHMNPEIYLFVK</original>
    <variation>MTDSATANGDDRDPEIELFVK</variation>
    <location>
        <begin position="160"/>
        <end position="180"/>
    </location>
</feature>
<feature type="splice variant" id="VSP_044891" description="In isoform 3." evidence="16">
    <original>IVAKKYRNYDIPAEMTGLWRYLKNAYARDEFTNTCAADSEIELAYADVAKRLSRS</original>
    <variation>EQVPLKGMI</variation>
    <location>
        <begin position="356"/>
        <end position="410"/>
    </location>
</feature>
<feature type="sequence variant" id="VAR_059208" description="In dbSNP:rs723580.">
    <original>T</original>
    <variation>A</variation>
    <location>
        <position position="114"/>
    </location>
</feature>
<feature type="sequence variant" id="VAR_047541" description="In dbSNP:rs35822882.">
    <original>P</original>
    <variation>H</variation>
    <location>
        <position position="257"/>
    </location>
</feature>
<feature type="sequence conflict" description="In Ref. 2; AAK52083." evidence="17" ref="2">
    <original>L</original>
    <variation>F</variation>
    <location>
        <position position="201"/>
    </location>
</feature>
<feature type="strand" evidence="20">
    <location>
        <begin position="175"/>
        <end position="181"/>
    </location>
</feature>
<feature type="strand" evidence="20">
    <location>
        <begin position="185"/>
        <end position="188"/>
    </location>
</feature>
<feature type="helix" evidence="20">
    <location>
        <begin position="192"/>
        <end position="204"/>
    </location>
</feature>
<feature type="strand" evidence="20">
    <location>
        <begin position="209"/>
        <end position="213"/>
    </location>
</feature>
<feature type="strand" evidence="20">
    <location>
        <begin position="233"/>
        <end position="236"/>
    </location>
</feature>
<feature type="strand" evidence="20">
    <location>
        <begin position="239"/>
        <end position="241"/>
    </location>
</feature>
<feature type="helix" evidence="20">
    <location>
        <begin position="244"/>
        <end position="254"/>
    </location>
</feature>
<feature type="turn" evidence="20">
    <location>
        <begin position="257"/>
        <end position="259"/>
    </location>
</feature>
<feature type="helix" evidence="20">
    <location>
        <begin position="268"/>
        <end position="271"/>
    </location>
</feature>
<feature type="turn" evidence="20">
    <location>
        <begin position="272"/>
        <end position="276"/>
    </location>
</feature>
<feature type="helix" evidence="20">
    <location>
        <begin position="277"/>
        <end position="286"/>
    </location>
</feature>
<feature type="helix" evidence="20">
    <location>
        <begin position="290"/>
        <end position="292"/>
    </location>
</feature>
<feature type="helix" evidence="20">
    <location>
        <begin position="293"/>
        <end position="312"/>
    </location>
</feature>
<feature type="helix" evidence="20">
    <location>
        <begin position="316"/>
        <end position="319"/>
    </location>
</feature>
<feature type="strand" evidence="20">
    <location>
        <begin position="337"/>
        <end position="339"/>
    </location>
</feature>
<feature type="helix" evidence="20">
    <location>
        <begin position="342"/>
        <end position="362"/>
    </location>
</feature>
<feature type="helix" evidence="20">
    <location>
        <begin position="371"/>
        <end position="381"/>
    </location>
</feature>
<feature type="helix" evidence="20">
    <location>
        <begin position="384"/>
        <end position="387"/>
    </location>
</feature>
<feature type="helix" evidence="20">
    <location>
        <begin position="393"/>
        <end position="399"/>
    </location>
</feature>
<feature type="turn" evidence="20">
    <location>
        <begin position="400"/>
        <end position="403"/>
    </location>
</feature>
<feature type="sequence conflict" description="In Ref. 1; AAF66928." evidence="17" ref="1">
    <original>R</original>
    <variation>S</variation>
    <location sequence="Q9NZA1-2">
        <position position="12"/>
    </location>
</feature>